<proteinExistence type="inferred from homology"/>
<evidence type="ECO:0000255" key="1">
    <source>
        <dbReference type="HAMAP-Rule" id="MF_00076"/>
    </source>
</evidence>
<evidence type="ECO:0000305" key="2"/>
<organism>
    <name type="scientific">Zymomonas mobilis subsp. mobilis (strain ATCC 31821 / ZM4 / CP4)</name>
    <dbReference type="NCBI Taxonomy" id="264203"/>
    <lineage>
        <taxon>Bacteria</taxon>
        <taxon>Pseudomonadati</taxon>
        <taxon>Pseudomonadota</taxon>
        <taxon>Alphaproteobacteria</taxon>
        <taxon>Sphingomonadales</taxon>
        <taxon>Zymomonadaceae</taxon>
        <taxon>Zymomonas</taxon>
    </lineage>
</organism>
<protein>
    <recommendedName>
        <fullName evidence="1">Imidazoleglycerol-phosphate dehydratase</fullName>
        <shortName evidence="1">IGPD</shortName>
        <ecNumber evidence="1">4.2.1.19</ecNumber>
    </recommendedName>
</protein>
<sequence length="196" mass="21676">MQRIASIHRQTAETDVHIHLNLDGHGQYNVKTGIGFFDHMLDQLFRHSLIDCDVTVKGDLHIDPHHTIEDCALALGQAVQQALGDKAGITRFSHAYAPMDEALSRVAIDISGRPYLVWHSAFTQPRLGDLDTEMLEHWFLSFAQGAGLTLHVETLYGRNNHHIAESLFKALALALRQAVAIDAGKQGRIPSTKGSL</sequence>
<comment type="catalytic activity">
    <reaction evidence="1">
        <text>D-erythro-1-(imidazol-4-yl)glycerol 3-phosphate = 3-(imidazol-4-yl)-2-oxopropyl phosphate + H2O</text>
        <dbReference type="Rhea" id="RHEA:11040"/>
        <dbReference type="ChEBI" id="CHEBI:15377"/>
        <dbReference type="ChEBI" id="CHEBI:57766"/>
        <dbReference type="ChEBI" id="CHEBI:58278"/>
        <dbReference type="EC" id="4.2.1.19"/>
    </reaction>
</comment>
<comment type="pathway">
    <text evidence="1">Amino-acid biosynthesis; L-histidine biosynthesis; L-histidine from 5-phospho-alpha-D-ribose 1-diphosphate: step 6/9.</text>
</comment>
<comment type="subcellular location">
    <subcellularLocation>
        <location evidence="1">Cytoplasm</location>
    </subcellularLocation>
</comment>
<comment type="similarity">
    <text evidence="1">Belongs to the imidazoleglycerol-phosphate dehydratase family.</text>
</comment>
<comment type="sequence caution" evidence="2">
    <conflict type="erroneous initiation">
        <sequence resource="EMBL-CDS" id="AAV90127"/>
    </conflict>
</comment>
<reference key="1">
    <citation type="journal article" date="2005" name="Nat. Biotechnol.">
        <title>The genome sequence of the ethanologenic bacterium Zymomonas mobilis ZM4.</title>
        <authorList>
            <person name="Seo J.-S."/>
            <person name="Chong H."/>
            <person name="Park H.S."/>
            <person name="Yoon K.-O."/>
            <person name="Jung C."/>
            <person name="Kim J.J."/>
            <person name="Hong J.H."/>
            <person name="Kim H."/>
            <person name="Kim J.-H."/>
            <person name="Kil J.-I."/>
            <person name="Park C.J."/>
            <person name="Oh H.-M."/>
            <person name="Lee J.-S."/>
            <person name="Jin S.-J."/>
            <person name="Um H.-W."/>
            <person name="Lee H.-J."/>
            <person name="Oh S.-J."/>
            <person name="Kim J.Y."/>
            <person name="Kang H.L."/>
            <person name="Lee S.Y."/>
            <person name="Lee K.J."/>
            <person name="Kang H.S."/>
        </authorList>
    </citation>
    <scope>NUCLEOTIDE SEQUENCE [LARGE SCALE GENOMIC DNA]</scope>
    <source>
        <strain>ATCC 31821 / ZM4 / CP4</strain>
    </source>
</reference>
<accession>Q5NMD3</accession>
<keyword id="KW-0028">Amino-acid biosynthesis</keyword>
<keyword id="KW-0963">Cytoplasm</keyword>
<keyword id="KW-0368">Histidine biosynthesis</keyword>
<keyword id="KW-0456">Lyase</keyword>
<keyword id="KW-1185">Reference proteome</keyword>
<gene>
    <name evidence="1" type="primary">hisB</name>
    <name type="ordered locus">ZMO1503</name>
</gene>
<feature type="chain" id="PRO_0000336358" description="Imidazoleglycerol-phosphate dehydratase">
    <location>
        <begin position="1"/>
        <end position="196"/>
    </location>
</feature>
<dbReference type="EC" id="4.2.1.19" evidence="1"/>
<dbReference type="EMBL" id="AE008692">
    <property type="protein sequence ID" value="AAV90127.1"/>
    <property type="status" value="ALT_INIT"/>
    <property type="molecule type" value="Genomic_DNA"/>
</dbReference>
<dbReference type="SMR" id="Q5NMD3"/>
<dbReference type="STRING" id="264203.ZMO1503"/>
<dbReference type="KEGG" id="zmo:ZMO1503"/>
<dbReference type="eggNOG" id="COG0131">
    <property type="taxonomic scope" value="Bacteria"/>
</dbReference>
<dbReference type="HOGENOM" id="CLU_044308_3_0_5"/>
<dbReference type="UniPathway" id="UPA00031">
    <property type="reaction ID" value="UER00011"/>
</dbReference>
<dbReference type="Proteomes" id="UP000001173">
    <property type="component" value="Chromosome"/>
</dbReference>
<dbReference type="GO" id="GO:0005737">
    <property type="term" value="C:cytoplasm"/>
    <property type="evidence" value="ECO:0007669"/>
    <property type="project" value="UniProtKB-SubCell"/>
</dbReference>
<dbReference type="GO" id="GO:0004424">
    <property type="term" value="F:imidazoleglycerol-phosphate dehydratase activity"/>
    <property type="evidence" value="ECO:0007669"/>
    <property type="project" value="UniProtKB-UniRule"/>
</dbReference>
<dbReference type="GO" id="GO:0000105">
    <property type="term" value="P:L-histidine biosynthetic process"/>
    <property type="evidence" value="ECO:0007669"/>
    <property type="project" value="UniProtKB-UniRule"/>
</dbReference>
<dbReference type="CDD" id="cd07914">
    <property type="entry name" value="IGPD"/>
    <property type="match status" value="1"/>
</dbReference>
<dbReference type="FunFam" id="3.30.230.40:FF:000001">
    <property type="entry name" value="Imidazoleglycerol-phosphate dehydratase HisB"/>
    <property type="match status" value="1"/>
</dbReference>
<dbReference type="FunFam" id="3.30.230.40:FF:000003">
    <property type="entry name" value="Imidazoleglycerol-phosphate dehydratase HisB"/>
    <property type="match status" value="1"/>
</dbReference>
<dbReference type="Gene3D" id="3.30.230.40">
    <property type="entry name" value="Imidazole glycerol phosphate dehydratase, domain 1"/>
    <property type="match status" value="2"/>
</dbReference>
<dbReference type="HAMAP" id="MF_00076">
    <property type="entry name" value="HisB"/>
    <property type="match status" value="1"/>
</dbReference>
<dbReference type="InterPro" id="IPR038494">
    <property type="entry name" value="IGPD_sf"/>
</dbReference>
<dbReference type="InterPro" id="IPR000807">
    <property type="entry name" value="ImidazoleglycerolP_deHydtase"/>
</dbReference>
<dbReference type="InterPro" id="IPR020565">
    <property type="entry name" value="ImidazoleglycerP_deHydtase_CS"/>
</dbReference>
<dbReference type="InterPro" id="IPR020568">
    <property type="entry name" value="Ribosomal_Su5_D2-typ_SF"/>
</dbReference>
<dbReference type="NCBIfam" id="NF002109">
    <property type="entry name" value="PRK00951.1-5"/>
    <property type="match status" value="1"/>
</dbReference>
<dbReference type="NCBIfam" id="NF002111">
    <property type="entry name" value="PRK00951.2-1"/>
    <property type="match status" value="1"/>
</dbReference>
<dbReference type="NCBIfam" id="NF002114">
    <property type="entry name" value="PRK00951.2-4"/>
    <property type="match status" value="1"/>
</dbReference>
<dbReference type="PANTHER" id="PTHR23133:SF2">
    <property type="entry name" value="IMIDAZOLEGLYCEROL-PHOSPHATE DEHYDRATASE"/>
    <property type="match status" value="1"/>
</dbReference>
<dbReference type="PANTHER" id="PTHR23133">
    <property type="entry name" value="IMIDAZOLEGLYCEROL-PHOSPHATE DEHYDRATASE HIS7"/>
    <property type="match status" value="1"/>
</dbReference>
<dbReference type="Pfam" id="PF00475">
    <property type="entry name" value="IGPD"/>
    <property type="match status" value="1"/>
</dbReference>
<dbReference type="SUPFAM" id="SSF54211">
    <property type="entry name" value="Ribosomal protein S5 domain 2-like"/>
    <property type="match status" value="2"/>
</dbReference>
<dbReference type="PROSITE" id="PS00954">
    <property type="entry name" value="IGP_DEHYDRATASE_1"/>
    <property type="match status" value="1"/>
</dbReference>
<dbReference type="PROSITE" id="PS00955">
    <property type="entry name" value="IGP_DEHYDRATASE_2"/>
    <property type="match status" value="1"/>
</dbReference>
<name>HIS7_ZYMMO</name>